<dbReference type="EC" id="2.1.3.15" evidence="1"/>
<dbReference type="EMBL" id="CP000712">
    <property type="protein sequence ID" value="ABQ79889.1"/>
    <property type="molecule type" value="Genomic_DNA"/>
</dbReference>
<dbReference type="SMR" id="A5W6X9"/>
<dbReference type="KEGG" id="ppf:Pput_3765"/>
<dbReference type="eggNOG" id="COG0777">
    <property type="taxonomic scope" value="Bacteria"/>
</dbReference>
<dbReference type="HOGENOM" id="CLU_015486_1_0_6"/>
<dbReference type="UniPathway" id="UPA00655">
    <property type="reaction ID" value="UER00711"/>
</dbReference>
<dbReference type="GO" id="GO:0009329">
    <property type="term" value="C:acetate CoA-transferase complex"/>
    <property type="evidence" value="ECO:0007669"/>
    <property type="project" value="TreeGrafter"/>
</dbReference>
<dbReference type="GO" id="GO:0003989">
    <property type="term" value="F:acetyl-CoA carboxylase activity"/>
    <property type="evidence" value="ECO:0007669"/>
    <property type="project" value="InterPro"/>
</dbReference>
<dbReference type="GO" id="GO:0005524">
    <property type="term" value="F:ATP binding"/>
    <property type="evidence" value="ECO:0007669"/>
    <property type="project" value="UniProtKB-KW"/>
</dbReference>
<dbReference type="GO" id="GO:0016743">
    <property type="term" value="F:carboxyl- or carbamoyltransferase activity"/>
    <property type="evidence" value="ECO:0007669"/>
    <property type="project" value="UniProtKB-UniRule"/>
</dbReference>
<dbReference type="GO" id="GO:0008270">
    <property type="term" value="F:zinc ion binding"/>
    <property type="evidence" value="ECO:0007669"/>
    <property type="project" value="UniProtKB-UniRule"/>
</dbReference>
<dbReference type="GO" id="GO:0006633">
    <property type="term" value="P:fatty acid biosynthetic process"/>
    <property type="evidence" value="ECO:0007669"/>
    <property type="project" value="UniProtKB-KW"/>
</dbReference>
<dbReference type="GO" id="GO:2001295">
    <property type="term" value="P:malonyl-CoA biosynthetic process"/>
    <property type="evidence" value="ECO:0007669"/>
    <property type="project" value="UniProtKB-UniRule"/>
</dbReference>
<dbReference type="Gene3D" id="3.90.226.10">
    <property type="entry name" value="2-enoyl-CoA Hydratase, Chain A, domain 1"/>
    <property type="match status" value="1"/>
</dbReference>
<dbReference type="HAMAP" id="MF_01395">
    <property type="entry name" value="AcetylCoA_CT_beta"/>
    <property type="match status" value="1"/>
</dbReference>
<dbReference type="InterPro" id="IPR034733">
    <property type="entry name" value="AcCoA_carboxyl_beta"/>
</dbReference>
<dbReference type="InterPro" id="IPR000438">
    <property type="entry name" value="Acetyl_CoA_COase_Trfase_b_su"/>
</dbReference>
<dbReference type="InterPro" id="IPR029045">
    <property type="entry name" value="ClpP/crotonase-like_dom_sf"/>
</dbReference>
<dbReference type="InterPro" id="IPR011762">
    <property type="entry name" value="COA_CT_N"/>
</dbReference>
<dbReference type="InterPro" id="IPR041010">
    <property type="entry name" value="Znf-ACC"/>
</dbReference>
<dbReference type="NCBIfam" id="TIGR00515">
    <property type="entry name" value="accD"/>
    <property type="match status" value="1"/>
</dbReference>
<dbReference type="PANTHER" id="PTHR42995">
    <property type="entry name" value="ACETYL-COENZYME A CARBOXYLASE CARBOXYL TRANSFERASE SUBUNIT BETA, CHLOROPLASTIC"/>
    <property type="match status" value="1"/>
</dbReference>
<dbReference type="PANTHER" id="PTHR42995:SF5">
    <property type="entry name" value="ACETYL-COENZYME A CARBOXYLASE CARBOXYL TRANSFERASE SUBUNIT BETA, CHLOROPLASTIC"/>
    <property type="match status" value="1"/>
</dbReference>
<dbReference type="Pfam" id="PF01039">
    <property type="entry name" value="Carboxyl_trans"/>
    <property type="match status" value="1"/>
</dbReference>
<dbReference type="Pfam" id="PF17848">
    <property type="entry name" value="Zn_ribbon_ACC"/>
    <property type="match status" value="1"/>
</dbReference>
<dbReference type="PRINTS" id="PR01070">
    <property type="entry name" value="ACCCTRFRASEB"/>
</dbReference>
<dbReference type="SUPFAM" id="SSF52096">
    <property type="entry name" value="ClpP/crotonase"/>
    <property type="match status" value="1"/>
</dbReference>
<dbReference type="PROSITE" id="PS50980">
    <property type="entry name" value="COA_CT_NTER"/>
    <property type="match status" value="1"/>
</dbReference>
<accession>A5W6X9</accession>
<comment type="function">
    <text evidence="1">Component of the acetyl coenzyme A carboxylase (ACC) complex. Biotin carboxylase (BC) catalyzes the carboxylation of biotin on its carrier protein (BCCP) and then the CO(2) group is transferred by the transcarboxylase to acetyl-CoA to form malonyl-CoA.</text>
</comment>
<comment type="catalytic activity">
    <reaction evidence="1">
        <text>N(6)-carboxybiotinyl-L-lysyl-[protein] + acetyl-CoA = N(6)-biotinyl-L-lysyl-[protein] + malonyl-CoA</text>
        <dbReference type="Rhea" id="RHEA:54728"/>
        <dbReference type="Rhea" id="RHEA-COMP:10505"/>
        <dbReference type="Rhea" id="RHEA-COMP:10506"/>
        <dbReference type="ChEBI" id="CHEBI:57288"/>
        <dbReference type="ChEBI" id="CHEBI:57384"/>
        <dbReference type="ChEBI" id="CHEBI:83144"/>
        <dbReference type="ChEBI" id="CHEBI:83145"/>
        <dbReference type="EC" id="2.1.3.15"/>
    </reaction>
</comment>
<comment type="cofactor">
    <cofactor evidence="1">
        <name>Zn(2+)</name>
        <dbReference type="ChEBI" id="CHEBI:29105"/>
    </cofactor>
    <text evidence="1">Binds 1 zinc ion per subunit.</text>
</comment>
<comment type="pathway">
    <text evidence="1">Lipid metabolism; malonyl-CoA biosynthesis; malonyl-CoA from acetyl-CoA: step 1/1.</text>
</comment>
<comment type="subunit">
    <text evidence="1">Acetyl-CoA carboxylase is a heterohexamer composed of biotin carboxyl carrier protein (AccB), biotin carboxylase (AccC) and two subunits each of ACCase subunit alpha (AccA) and ACCase subunit beta (AccD).</text>
</comment>
<comment type="subcellular location">
    <subcellularLocation>
        <location evidence="1">Cytoplasm</location>
    </subcellularLocation>
</comment>
<comment type="similarity">
    <text evidence="1">Belongs to the AccD/PCCB family.</text>
</comment>
<name>ACCD_PSEP1</name>
<protein>
    <recommendedName>
        <fullName evidence="1">Acetyl-coenzyme A carboxylase carboxyl transferase subunit beta</fullName>
        <shortName evidence="1">ACCase subunit beta</shortName>
        <shortName evidence="1">Acetyl-CoA carboxylase carboxyltransferase subunit beta</shortName>
        <ecNumber evidence="1">2.1.3.15</ecNumber>
    </recommendedName>
</protein>
<feature type="chain" id="PRO_0000359040" description="Acetyl-coenzyme A carboxylase carboxyl transferase subunit beta">
    <location>
        <begin position="1"/>
        <end position="297"/>
    </location>
</feature>
<feature type="domain" description="CoA carboxyltransferase N-terminal" evidence="2">
    <location>
        <begin position="27"/>
        <end position="296"/>
    </location>
</feature>
<feature type="zinc finger region" description="C4-type" evidence="1">
    <location>
        <begin position="31"/>
        <end position="53"/>
    </location>
</feature>
<feature type="binding site" evidence="1">
    <location>
        <position position="31"/>
    </location>
    <ligand>
        <name>Zn(2+)</name>
        <dbReference type="ChEBI" id="CHEBI:29105"/>
    </ligand>
</feature>
<feature type="binding site" evidence="1">
    <location>
        <position position="34"/>
    </location>
    <ligand>
        <name>Zn(2+)</name>
        <dbReference type="ChEBI" id="CHEBI:29105"/>
    </ligand>
</feature>
<feature type="binding site" evidence="1">
    <location>
        <position position="50"/>
    </location>
    <ligand>
        <name>Zn(2+)</name>
        <dbReference type="ChEBI" id="CHEBI:29105"/>
    </ligand>
</feature>
<feature type="binding site" evidence="1">
    <location>
        <position position="53"/>
    </location>
    <ligand>
        <name>Zn(2+)</name>
        <dbReference type="ChEBI" id="CHEBI:29105"/>
    </ligand>
</feature>
<keyword id="KW-0067">ATP-binding</keyword>
<keyword id="KW-0963">Cytoplasm</keyword>
<keyword id="KW-0275">Fatty acid biosynthesis</keyword>
<keyword id="KW-0276">Fatty acid metabolism</keyword>
<keyword id="KW-0444">Lipid biosynthesis</keyword>
<keyword id="KW-0443">Lipid metabolism</keyword>
<keyword id="KW-0479">Metal-binding</keyword>
<keyword id="KW-0547">Nucleotide-binding</keyword>
<keyword id="KW-0808">Transferase</keyword>
<keyword id="KW-0862">Zinc</keyword>
<keyword id="KW-0863">Zinc-finger</keyword>
<gene>
    <name evidence="1" type="primary">accD</name>
    <name type="ordered locus">Pput_3765</name>
</gene>
<sequence>MSNWLVDKLIPSIMRSEVKKSSVPEGLWHKCPSCEAVLYRPELEKTLDVCPKCNHHMRIGARARIDIFLDAEGRAELGADLEPVDRLKFRDGKKYKDRLTAAQKQTGEKDALISMSGTLMGMPIVVSAFEFSFMGGSMGAIVGERFVRAANYALENRCPMVCFSASGGARMQEALISLMQMAKTSAVLARLREEGIPFISVLTDPVYGGVSASLAMLGDVIVGEPKALIGFAGPRVIEQTVREKLPEGFQRSEFLLEHGAIDLIISRGELRPRLARLLAQMTGQQTPEEAREAAAVA</sequence>
<evidence type="ECO:0000255" key="1">
    <source>
        <dbReference type="HAMAP-Rule" id="MF_01395"/>
    </source>
</evidence>
<evidence type="ECO:0000255" key="2">
    <source>
        <dbReference type="PROSITE-ProRule" id="PRU01136"/>
    </source>
</evidence>
<proteinExistence type="inferred from homology"/>
<reference key="1">
    <citation type="submission" date="2007-05" db="EMBL/GenBank/DDBJ databases">
        <title>Complete sequence of Pseudomonas putida F1.</title>
        <authorList>
            <consortium name="US DOE Joint Genome Institute"/>
            <person name="Copeland A."/>
            <person name="Lucas S."/>
            <person name="Lapidus A."/>
            <person name="Barry K."/>
            <person name="Detter J.C."/>
            <person name="Glavina del Rio T."/>
            <person name="Hammon N."/>
            <person name="Israni S."/>
            <person name="Dalin E."/>
            <person name="Tice H."/>
            <person name="Pitluck S."/>
            <person name="Chain P."/>
            <person name="Malfatti S."/>
            <person name="Shin M."/>
            <person name="Vergez L."/>
            <person name="Schmutz J."/>
            <person name="Larimer F."/>
            <person name="Land M."/>
            <person name="Hauser L."/>
            <person name="Kyrpides N."/>
            <person name="Lykidis A."/>
            <person name="Parales R."/>
            <person name="Richardson P."/>
        </authorList>
    </citation>
    <scope>NUCLEOTIDE SEQUENCE [LARGE SCALE GENOMIC DNA]</scope>
    <source>
        <strain>ATCC 700007 / DSM 6899 / JCM 31910 / BCRC 17059 / LMG 24140 / F1</strain>
    </source>
</reference>
<organism>
    <name type="scientific">Pseudomonas putida (strain ATCC 700007 / DSM 6899 / JCM 31910 / BCRC 17059 / LMG 24140 / F1)</name>
    <dbReference type="NCBI Taxonomy" id="351746"/>
    <lineage>
        <taxon>Bacteria</taxon>
        <taxon>Pseudomonadati</taxon>
        <taxon>Pseudomonadota</taxon>
        <taxon>Gammaproteobacteria</taxon>
        <taxon>Pseudomonadales</taxon>
        <taxon>Pseudomonadaceae</taxon>
        <taxon>Pseudomonas</taxon>
    </lineage>
</organism>